<dbReference type="EMBL" id="BX569693">
    <property type="protein sequence ID" value="CAE08268.1"/>
    <property type="molecule type" value="Genomic_DNA"/>
</dbReference>
<dbReference type="RefSeq" id="WP_011128613.1">
    <property type="nucleotide sequence ID" value="NC_005070.1"/>
</dbReference>
<dbReference type="SMR" id="Q7U5F4"/>
<dbReference type="STRING" id="84588.SYNW1753"/>
<dbReference type="KEGG" id="syw:SYNW1753"/>
<dbReference type="eggNOG" id="COG0233">
    <property type="taxonomic scope" value="Bacteria"/>
</dbReference>
<dbReference type="HOGENOM" id="CLU_073981_2_0_3"/>
<dbReference type="Proteomes" id="UP000001422">
    <property type="component" value="Chromosome"/>
</dbReference>
<dbReference type="GO" id="GO:0005737">
    <property type="term" value="C:cytoplasm"/>
    <property type="evidence" value="ECO:0007669"/>
    <property type="project" value="UniProtKB-SubCell"/>
</dbReference>
<dbReference type="GO" id="GO:0043023">
    <property type="term" value="F:ribosomal large subunit binding"/>
    <property type="evidence" value="ECO:0007669"/>
    <property type="project" value="TreeGrafter"/>
</dbReference>
<dbReference type="GO" id="GO:0006415">
    <property type="term" value="P:translational termination"/>
    <property type="evidence" value="ECO:0007669"/>
    <property type="project" value="UniProtKB-UniRule"/>
</dbReference>
<dbReference type="CDD" id="cd00520">
    <property type="entry name" value="RRF"/>
    <property type="match status" value="1"/>
</dbReference>
<dbReference type="FunFam" id="1.10.132.20:FF:000001">
    <property type="entry name" value="Ribosome-recycling factor"/>
    <property type="match status" value="1"/>
</dbReference>
<dbReference type="FunFam" id="3.30.1360.40:FF:000001">
    <property type="entry name" value="Ribosome-recycling factor"/>
    <property type="match status" value="1"/>
</dbReference>
<dbReference type="Gene3D" id="3.30.1360.40">
    <property type="match status" value="1"/>
</dbReference>
<dbReference type="Gene3D" id="1.10.132.20">
    <property type="entry name" value="Ribosome-recycling factor"/>
    <property type="match status" value="1"/>
</dbReference>
<dbReference type="HAMAP" id="MF_00040">
    <property type="entry name" value="RRF"/>
    <property type="match status" value="1"/>
</dbReference>
<dbReference type="InterPro" id="IPR002661">
    <property type="entry name" value="Ribosome_recyc_fac"/>
</dbReference>
<dbReference type="InterPro" id="IPR023584">
    <property type="entry name" value="Ribosome_recyc_fac_dom"/>
</dbReference>
<dbReference type="InterPro" id="IPR036191">
    <property type="entry name" value="RRF_sf"/>
</dbReference>
<dbReference type="NCBIfam" id="TIGR00496">
    <property type="entry name" value="frr"/>
    <property type="match status" value="1"/>
</dbReference>
<dbReference type="PANTHER" id="PTHR20982:SF3">
    <property type="entry name" value="MITOCHONDRIAL RIBOSOME RECYCLING FACTOR PSEUDO 1"/>
    <property type="match status" value="1"/>
</dbReference>
<dbReference type="PANTHER" id="PTHR20982">
    <property type="entry name" value="RIBOSOME RECYCLING FACTOR"/>
    <property type="match status" value="1"/>
</dbReference>
<dbReference type="Pfam" id="PF01765">
    <property type="entry name" value="RRF"/>
    <property type="match status" value="1"/>
</dbReference>
<dbReference type="SUPFAM" id="SSF55194">
    <property type="entry name" value="Ribosome recycling factor, RRF"/>
    <property type="match status" value="1"/>
</dbReference>
<sequence>MSTQDLEASMRKSVEATQRNFNTIRTGRANSSLLDRISVEYYGAETPLKSLATLSTPDSQTIQIQPFDISALASIEKAIAMSELGFTPNNDGKIIRINVPPLTEERRKEFCKLASKYAEEGKVALRNLRRDAIDKVKKQEKDGDFSEDQSRDEQDAVQKTLDKFIAELEKHLADKEADILKV</sequence>
<keyword id="KW-0963">Cytoplasm</keyword>
<keyword id="KW-0648">Protein biosynthesis</keyword>
<feature type="chain" id="PRO_0000167563" description="Ribosome-recycling factor">
    <location>
        <begin position="1"/>
        <end position="182"/>
    </location>
</feature>
<accession>Q7U5F4</accession>
<proteinExistence type="inferred from homology"/>
<comment type="function">
    <text evidence="1">Responsible for the release of ribosomes from messenger RNA at the termination of protein biosynthesis. May increase the efficiency of translation by recycling ribosomes from one round of translation to another.</text>
</comment>
<comment type="subcellular location">
    <subcellularLocation>
        <location evidence="1">Cytoplasm</location>
    </subcellularLocation>
</comment>
<comment type="similarity">
    <text evidence="1">Belongs to the RRF family.</text>
</comment>
<reference key="1">
    <citation type="journal article" date="2003" name="Nature">
        <title>The genome of a motile marine Synechococcus.</title>
        <authorList>
            <person name="Palenik B."/>
            <person name="Brahamsha B."/>
            <person name="Larimer F.W."/>
            <person name="Land M.L."/>
            <person name="Hauser L."/>
            <person name="Chain P."/>
            <person name="Lamerdin J.E."/>
            <person name="Regala W."/>
            <person name="Allen E.E."/>
            <person name="McCarren J."/>
            <person name="Paulsen I.T."/>
            <person name="Dufresne A."/>
            <person name="Partensky F."/>
            <person name="Webb E.A."/>
            <person name="Waterbury J."/>
        </authorList>
    </citation>
    <scope>NUCLEOTIDE SEQUENCE [LARGE SCALE GENOMIC DNA]</scope>
    <source>
        <strain>WH8102</strain>
    </source>
</reference>
<organism>
    <name type="scientific">Parasynechococcus marenigrum (strain WH8102)</name>
    <dbReference type="NCBI Taxonomy" id="84588"/>
    <lineage>
        <taxon>Bacteria</taxon>
        <taxon>Bacillati</taxon>
        <taxon>Cyanobacteriota</taxon>
        <taxon>Cyanophyceae</taxon>
        <taxon>Synechococcales</taxon>
        <taxon>Prochlorococcaceae</taxon>
        <taxon>Parasynechococcus</taxon>
        <taxon>Parasynechococcus marenigrum</taxon>
    </lineage>
</organism>
<gene>
    <name evidence="1" type="primary">frr</name>
    <name type="ordered locus">SYNW1753</name>
</gene>
<name>RRF_PARMW</name>
<evidence type="ECO:0000255" key="1">
    <source>
        <dbReference type="HAMAP-Rule" id="MF_00040"/>
    </source>
</evidence>
<protein>
    <recommendedName>
        <fullName evidence="1">Ribosome-recycling factor</fullName>
        <shortName evidence="1">RRF</shortName>
    </recommendedName>
    <alternativeName>
        <fullName evidence="1">Ribosome-releasing factor</fullName>
    </alternativeName>
</protein>